<dbReference type="EMBL" id="CP000627">
    <property type="protein sequence ID" value="ABQ19834.1"/>
    <property type="molecule type" value="Genomic_DNA"/>
</dbReference>
<dbReference type="EMBL" id="CP001235">
    <property type="protein sequence ID" value="ACP08662.1"/>
    <property type="molecule type" value="Genomic_DNA"/>
</dbReference>
<dbReference type="RefSeq" id="WP_000005741.1">
    <property type="nucleotide sequence ID" value="NZ_JAACZH010000006.1"/>
</dbReference>
<dbReference type="SMR" id="A5F947"/>
<dbReference type="GeneID" id="88784003"/>
<dbReference type="KEGG" id="vco:VC0395_A0156"/>
<dbReference type="KEGG" id="vcr:VC395_0644"/>
<dbReference type="PATRIC" id="fig|345073.21.peg.625"/>
<dbReference type="eggNOG" id="COG0316">
    <property type="taxonomic scope" value="Bacteria"/>
</dbReference>
<dbReference type="HOGENOM" id="CLU_069054_5_3_6"/>
<dbReference type="OrthoDB" id="9801228at2"/>
<dbReference type="Proteomes" id="UP000000249">
    <property type="component" value="Chromosome 2"/>
</dbReference>
<dbReference type="GO" id="GO:0005829">
    <property type="term" value="C:cytosol"/>
    <property type="evidence" value="ECO:0007669"/>
    <property type="project" value="TreeGrafter"/>
</dbReference>
<dbReference type="GO" id="GO:0051537">
    <property type="term" value="F:2 iron, 2 sulfur cluster binding"/>
    <property type="evidence" value="ECO:0007669"/>
    <property type="project" value="TreeGrafter"/>
</dbReference>
<dbReference type="GO" id="GO:0051539">
    <property type="term" value="F:4 iron, 4 sulfur cluster binding"/>
    <property type="evidence" value="ECO:0007669"/>
    <property type="project" value="TreeGrafter"/>
</dbReference>
<dbReference type="GO" id="GO:0005506">
    <property type="term" value="F:iron ion binding"/>
    <property type="evidence" value="ECO:0007669"/>
    <property type="project" value="UniProtKB-UniRule"/>
</dbReference>
<dbReference type="GO" id="GO:0016226">
    <property type="term" value="P:iron-sulfur cluster assembly"/>
    <property type="evidence" value="ECO:0007669"/>
    <property type="project" value="UniProtKB-UniRule"/>
</dbReference>
<dbReference type="FunFam" id="2.60.300.12:FF:000002">
    <property type="entry name" value="Iron-sulfur cluster insertion protein ErpA"/>
    <property type="match status" value="1"/>
</dbReference>
<dbReference type="Gene3D" id="2.60.300.12">
    <property type="entry name" value="HesB-like domain"/>
    <property type="match status" value="1"/>
</dbReference>
<dbReference type="HAMAP" id="MF_01380">
    <property type="entry name" value="Fe_S_insert_ErpA"/>
    <property type="match status" value="1"/>
</dbReference>
<dbReference type="InterPro" id="IPR000361">
    <property type="entry name" value="FeS_biogenesis"/>
</dbReference>
<dbReference type="InterPro" id="IPR016092">
    <property type="entry name" value="FeS_cluster_insertion"/>
</dbReference>
<dbReference type="InterPro" id="IPR017870">
    <property type="entry name" value="FeS_cluster_insertion_CS"/>
</dbReference>
<dbReference type="InterPro" id="IPR023063">
    <property type="entry name" value="FeS_cluster_insertion_RrpA"/>
</dbReference>
<dbReference type="InterPro" id="IPR035903">
    <property type="entry name" value="HesB-like_dom_sf"/>
</dbReference>
<dbReference type="NCBIfam" id="TIGR00049">
    <property type="entry name" value="iron-sulfur cluster assembly accessory protein"/>
    <property type="match status" value="1"/>
</dbReference>
<dbReference type="NCBIfam" id="NF010147">
    <property type="entry name" value="PRK13623.1"/>
    <property type="match status" value="1"/>
</dbReference>
<dbReference type="PANTHER" id="PTHR43011">
    <property type="entry name" value="IRON-SULFUR CLUSTER ASSEMBLY 2 HOMOLOG, MITOCHONDRIAL"/>
    <property type="match status" value="1"/>
</dbReference>
<dbReference type="PANTHER" id="PTHR43011:SF1">
    <property type="entry name" value="IRON-SULFUR CLUSTER ASSEMBLY 2 HOMOLOG, MITOCHONDRIAL"/>
    <property type="match status" value="1"/>
</dbReference>
<dbReference type="Pfam" id="PF01521">
    <property type="entry name" value="Fe-S_biosyn"/>
    <property type="match status" value="1"/>
</dbReference>
<dbReference type="SUPFAM" id="SSF89360">
    <property type="entry name" value="HesB-like domain"/>
    <property type="match status" value="1"/>
</dbReference>
<dbReference type="PROSITE" id="PS01152">
    <property type="entry name" value="HESB"/>
    <property type="match status" value="1"/>
</dbReference>
<feature type="chain" id="PRO_1000073461" description="Iron-sulfur cluster insertion protein ErpA">
    <location>
        <begin position="1"/>
        <end position="113"/>
    </location>
</feature>
<feature type="binding site" evidence="1">
    <location>
        <position position="41"/>
    </location>
    <ligand>
        <name>iron-sulfur cluster</name>
        <dbReference type="ChEBI" id="CHEBI:30408"/>
    </ligand>
</feature>
<feature type="binding site" evidence="1">
    <location>
        <position position="105"/>
    </location>
    <ligand>
        <name>iron-sulfur cluster</name>
        <dbReference type="ChEBI" id="CHEBI:30408"/>
    </ligand>
</feature>
<feature type="binding site" evidence="1">
    <location>
        <position position="107"/>
    </location>
    <ligand>
        <name>iron-sulfur cluster</name>
        <dbReference type="ChEBI" id="CHEBI:30408"/>
    </ligand>
</feature>
<reference key="1">
    <citation type="submission" date="2007-03" db="EMBL/GenBank/DDBJ databases">
        <authorList>
            <person name="Heidelberg J."/>
        </authorList>
    </citation>
    <scope>NUCLEOTIDE SEQUENCE [LARGE SCALE GENOMIC DNA]</scope>
    <source>
        <strain>ATCC 39541 / Classical Ogawa 395 / O395</strain>
    </source>
</reference>
<reference key="2">
    <citation type="journal article" date="2008" name="PLoS ONE">
        <title>A recalibrated molecular clock and independent origins for the cholera pandemic clones.</title>
        <authorList>
            <person name="Feng L."/>
            <person name="Reeves P.R."/>
            <person name="Lan R."/>
            <person name="Ren Y."/>
            <person name="Gao C."/>
            <person name="Zhou Z."/>
            <person name="Ren Y."/>
            <person name="Cheng J."/>
            <person name="Wang W."/>
            <person name="Wang J."/>
            <person name="Qian W."/>
            <person name="Li D."/>
            <person name="Wang L."/>
        </authorList>
    </citation>
    <scope>NUCLEOTIDE SEQUENCE [LARGE SCALE GENOMIC DNA]</scope>
    <source>
        <strain>ATCC 39541 / Classical Ogawa 395 / O395</strain>
    </source>
</reference>
<name>ERPA_VIBC3</name>
<comment type="function">
    <text evidence="1">Required for insertion of 4Fe-4S clusters for at least IspG.</text>
</comment>
<comment type="cofactor">
    <cofactor evidence="1">
        <name>iron-sulfur cluster</name>
        <dbReference type="ChEBI" id="CHEBI:30408"/>
    </cofactor>
    <text evidence="1">Binds 1 iron-sulfur cluster per subunit.</text>
</comment>
<comment type="subunit">
    <text evidence="1">Homodimer.</text>
</comment>
<comment type="similarity">
    <text evidence="1">Belongs to the HesB/IscA family.</text>
</comment>
<evidence type="ECO:0000255" key="1">
    <source>
        <dbReference type="HAMAP-Rule" id="MF_01380"/>
    </source>
</evidence>
<sequence length="113" mass="12017">MSEVNVPLSFSDAAAKRVKALIAEEENPSLMLRVYITGGGCSGFQYGFTFDETVNEGDTKIENSGVILVVDPMSLQYLIGGVVDYTEGLEGSRFFVNNPNATTTCGCGASFSV</sequence>
<gene>
    <name evidence="1" type="primary">erpA</name>
    <name type="ordered locus">VC0395_A0156</name>
    <name type="ordered locus">VC395_0644</name>
</gene>
<organism>
    <name type="scientific">Vibrio cholerae serotype O1 (strain ATCC 39541 / Classical Ogawa 395 / O395)</name>
    <dbReference type="NCBI Taxonomy" id="345073"/>
    <lineage>
        <taxon>Bacteria</taxon>
        <taxon>Pseudomonadati</taxon>
        <taxon>Pseudomonadota</taxon>
        <taxon>Gammaproteobacteria</taxon>
        <taxon>Vibrionales</taxon>
        <taxon>Vibrionaceae</taxon>
        <taxon>Vibrio</taxon>
    </lineage>
</organism>
<accession>A5F947</accession>
<accession>C3LXF2</accession>
<proteinExistence type="inferred from homology"/>
<protein>
    <recommendedName>
        <fullName evidence="1">Iron-sulfur cluster insertion protein ErpA</fullName>
    </recommendedName>
</protein>
<keyword id="KW-0408">Iron</keyword>
<keyword id="KW-0411">Iron-sulfur</keyword>
<keyword id="KW-0479">Metal-binding</keyword>